<organism>
    <name type="scientific">Escherichia coli (strain K12)</name>
    <dbReference type="NCBI Taxonomy" id="83333"/>
    <lineage>
        <taxon>Bacteria</taxon>
        <taxon>Pseudomonadati</taxon>
        <taxon>Pseudomonadota</taxon>
        <taxon>Gammaproteobacteria</taxon>
        <taxon>Enterobacterales</taxon>
        <taxon>Enterobacteriaceae</taxon>
        <taxon>Escherichia</taxon>
    </lineage>
</organism>
<sequence length="320" mass="35049">MDYRKIIKEIGRGKNHARDLDRDTARGLYAHMLNGEVPDLELGGVLIALRIKGEGEAEMLGFYEAMQNHTIKLTPPAGKPMPIVIPSYNGARKQANLTPLLAILLHKLGFPVVVHGVSEDPTRVLTETIFELMGITPTLHGGQAQAKLDEHQPVFMPVGAFCPPLEKQLAMRWRMGVRNSAHTLAKLATPFAEGEALRLSSVSHPEYIGRVAKFFSDIGGRALLMHGTEGEVYANPQRCPQINLIDREGMRVLYEKQDTAGSELLPQAKDPETTAQWIERCLAGSEPIPESLKIQMACCLVATGEAATISDGLARVNQAF</sequence>
<protein>
    <recommendedName>
        <fullName>Uncharacterized protein YbiB</fullName>
    </recommendedName>
</protein>
<reference key="1">
    <citation type="journal article" date="1994" name="Jpn. J. Genet.">
        <title>Structural analysis of the rhlE gene of Escherichia coli.</title>
        <authorList>
            <person name="Ohmori H."/>
        </authorList>
    </citation>
    <scope>NUCLEOTIDE SEQUENCE [GENOMIC DNA]</scope>
    <source>
        <strain>K12 / W3110 / ATCC 27325 / DSM 5911</strain>
    </source>
</reference>
<reference key="2">
    <citation type="journal article" date="1996" name="DNA Res.">
        <title>A 718-kb DNA sequence of the Escherichia coli K-12 genome corresponding to the 12.7-28.0 min region on the linkage map.</title>
        <authorList>
            <person name="Oshima T."/>
            <person name="Aiba H."/>
            <person name="Baba T."/>
            <person name="Fujita K."/>
            <person name="Hayashi K."/>
            <person name="Honjo A."/>
            <person name="Ikemoto K."/>
            <person name="Inada T."/>
            <person name="Itoh T."/>
            <person name="Kajihara M."/>
            <person name="Kanai K."/>
            <person name="Kashimoto K."/>
            <person name="Kimura S."/>
            <person name="Kitagawa M."/>
            <person name="Makino K."/>
            <person name="Masuda S."/>
            <person name="Miki T."/>
            <person name="Mizobuchi K."/>
            <person name="Mori H."/>
            <person name="Motomura K."/>
            <person name="Nakamura Y."/>
            <person name="Nashimoto H."/>
            <person name="Nishio Y."/>
            <person name="Saito N."/>
            <person name="Sampei G."/>
            <person name="Seki Y."/>
            <person name="Tagami H."/>
            <person name="Takemoto K."/>
            <person name="Wada C."/>
            <person name="Yamamoto Y."/>
            <person name="Yano M."/>
            <person name="Horiuchi T."/>
        </authorList>
    </citation>
    <scope>NUCLEOTIDE SEQUENCE [LARGE SCALE GENOMIC DNA]</scope>
    <source>
        <strain>K12 / W3110 / ATCC 27325 / DSM 5911</strain>
    </source>
</reference>
<reference key="3">
    <citation type="journal article" date="1997" name="Science">
        <title>The complete genome sequence of Escherichia coli K-12.</title>
        <authorList>
            <person name="Blattner F.R."/>
            <person name="Plunkett G. III"/>
            <person name="Bloch C.A."/>
            <person name="Perna N.T."/>
            <person name="Burland V."/>
            <person name="Riley M."/>
            <person name="Collado-Vides J."/>
            <person name="Glasner J.D."/>
            <person name="Rode C.K."/>
            <person name="Mayhew G.F."/>
            <person name="Gregor J."/>
            <person name="Davis N.W."/>
            <person name="Kirkpatrick H.A."/>
            <person name="Goeden M.A."/>
            <person name="Rose D.J."/>
            <person name="Mau B."/>
            <person name="Shao Y."/>
        </authorList>
    </citation>
    <scope>NUCLEOTIDE SEQUENCE [LARGE SCALE GENOMIC DNA]</scope>
    <source>
        <strain>K12 / MG1655 / ATCC 47076</strain>
    </source>
</reference>
<reference key="4">
    <citation type="journal article" date="2006" name="Mol. Syst. Biol.">
        <title>Highly accurate genome sequences of Escherichia coli K-12 strains MG1655 and W3110.</title>
        <authorList>
            <person name="Hayashi K."/>
            <person name="Morooka N."/>
            <person name="Yamamoto Y."/>
            <person name="Fujita K."/>
            <person name="Isono K."/>
            <person name="Choi S."/>
            <person name="Ohtsubo E."/>
            <person name="Baba T."/>
            <person name="Wanner B.L."/>
            <person name="Mori H."/>
            <person name="Horiuchi T."/>
        </authorList>
    </citation>
    <scope>NUCLEOTIDE SEQUENCE [LARGE SCALE GENOMIC DNA]</scope>
    <source>
        <strain>K12 / W3110 / ATCC 27325 / DSM 5911</strain>
    </source>
</reference>
<reference key="5">
    <citation type="journal article" date="2007" name="Genes Genet. Syst.">
        <title>A role of RnlA in the RNase LS activity from Escherichia coli.</title>
        <authorList>
            <person name="Otsuka Y."/>
            <person name="Koga M."/>
            <person name="Iwamoto A."/>
            <person name="Yonesaki T."/>
        </authorList>
    </citation>
    <scope>PROTEIN SEQUENCE OF 1-9</scope>
    <source>
        <strain>K12</strain>
    </source>
</reference>
<gene>
    <name type="primary">ybiB</name>
    <name type="ordered locus">b0800</name>
    <name type="ordered locus">JW0785</name>
</gene>
<proteinExistence type="evidence at protein level"/>
<comment type="similarity">
    <text evidence="1">Belongs to the anthranilate phosphoribosyltransferase family.</text>
</comment>
<feature type="chain" id="PRO_0000154530" description="Uncharacterized protein YbiB">
    <location>
        <begin position="1"/>
        <end position="320"/>
    </location>
</feature>
<feature type="helix" evidence="2">
    <location>
        <begin position="3"/>
        <end position="10"/>
    </location>
</feature>
<feature type="turn" evidence="2">
    <location>
        <begin position="14"/>
        <end position="16"/>
    </location>
</feature>
<feature type="helix" evidence="2">
    <location>
        <begin position="22"/>
        <end position="33"/>
    </location>
</feature>
<feature type="helix" evidence="2">
    <location>
        <begin position="39"/>
        <end position="52"/>
    </location>
</feature>
<feature type="helix" evidence="2">
    <location>
        <begin position="56"/>
        <end position="67"/>
    </location>
</feature>
<feature type="strand" evidence="2">
    <location>
        <begin position="83"/>
        <end position="88"/>
    </location>
</feature>
<feature type="strand" evidence="2">
    <location>
        <begin position="91"/>
        <end position="94"/>
    </location>
</feature>
<feature type="helix" evidence="2">
    <location>
        <begin position="98"/>
        <end position="107"/>
    </location>
</feature>
<feature type="strand" evidence="2">
    <location>
        <begin position="112"/>
        <end position="116"/>
    </location>
</feature>
<feature type="helix" evidence="2">
    <location>
        <begin position="126"/>
        <end position="132"/>
    </location>
</feature>
<feature type="helix" evidence="2">
    <location>
        <begin position="141"/>
        <end position="149"/>
    </location>
</feature>
<feature type="strand" evidence="2">
    <location>
        <begin position="154"/>
        <end position="157"/>
    </location>
</feature>
<feature type="helix" evidence="2">
    <location>
        <begin position="158"/>
        <end position="161"/>
    </location>
</feature>
<feature type="helix" evidence="2">
    <location>
        <begin position="165"/>
        <end position="170"/>
    </location>
</feature>
<feature type="helix" evidence="2">
    <location>
        <begin position="172"/>
        <end position="175"/>
    </location>
</feature>
<feature type="helix" evidence="2">
    <location>
        <begin position="180"/>
        <end position="184"/>
    </location>
</feature>
<feature type="helix" evidence="2">
    <location>
        <begin position="185"/>
        <end position="187"/>
    </location>
</feature>
<feature type="strand" evidence="2">
    <location>
        <begin position="195"/>
        <end position="201"/>
    </location>
</feature>
<feature type="helix" evidence="2">
    <location>
        <begin position="205"/>
        <end position="207"/>
    </location>
</feature>
<feature type="helix" evidence="2">
    <location>
        <begin position="208"/>
        <end position="218"/>
    </location>
</feature>
<feature type="strand" evidence="2">
    <location>
        <begin position="222"/>
        <end position="225"/>
    </location>
</feature>
<feature type="strand" evidence="2">
    <location>
        <begin position="231"/>
        <end position="233"/>
    </location>
</feature>
<feature type="strand" evidence="2">
    <location>
        <begin position="242"/>
        <end position="246"/>
    </location>
</feature>
<feature type="strand" evidence="2">
    <location>
        <begin position="249"/>
        <end position="254"/>
    </location>
</feature>
<feature type="helix" evidence="2">
    <location>
        <begin position="271"/>
        <end position="282"/>
    </location>
</feature>
<feature type="helix" evidence="2">
    <location>
        <begin position="290"/>
        <end position="302"/>
    </location>
</feature>
<feature type="helix" evidence="2">
    <location>
        <begin position="309"/>
        <end position="319"/>
    </location>
</feature>
<accession>P30177</accession>
<keyword id="KW-0002">3D-structure</keyword>
<keyword id="KW-0903">Direct protein sequencing</keyword>
<keyword id="KW-0328">Glycosyltransferase</keyword>
<keyword id="KW-1185">Reference proteome</keyword>
<keyword id="KW-0808">Transferase</keyword>
<dbReference type="EMBL" id="L02123">
    <property type="protein sequence ID" value="AAA53656.1"/>
    <property type="molecule type" value="Genomic_DNA"/>
</dbReference>
<dbReference type="EMBL" id="U00096">
    <property type="protein sequence ID" value="AAC73887.1"/>
    <property type="molecule type" value="Genomic_DNA"/>
</dbReference>
<dbReference type="EMBL" id="AP009048">
    <property type="protein sequence ID" value="BAA35466.1"/>
    <property type="molecule type" value="Genomic_DNA"/>
</dbReference>
<dbReference type="PIR" id="H64816">
    <property type="entry name" value="H64816"/>
</dbReference>
<dbReference type="RefSeq" id="NP_415321.1">
    <property type="nucleotide sequence ID" value="NC_000913.3"/>
</dbReference>
<dbReference type="RefSeq" id="WP_000386551.1">
    <property type="nucleotide sequence ID" value="NZ_STEB01000019.1"/>
</dbReference>
<dbReference type="PDB" id="4MUO">
    <property type="method" value="X-ray"/>
    <property type="resolution" value="1.94 A"/>
    <property type="chains" value="A/B=1-320"/>
</dbReference>
<dbReference type="PDB" id="8BFR">
    <property type="method" value="X-ray"/>
    <property type="resolution" value="1.30 A"/>
    <property type="chains" value="A=1-320"/>
</dbReference>
<dbReference type="PDB" id="8BFT">
    <property type="method" value="X-ray"/>
    <property type="resolution" value="1.19 A"/>
    <property type="chains" value="A=1-320"/>
</dbReference>
<dbReference type="PDBsum" id="4MUO"/>
<dbReference type="PDBsum" id="8BFR"/>
<dbReference type="PDBsum" id="8BFT"/>
<dbReference type="SASBDB" id="P30177"/>
<dbReference type="SMR" id="P30177"/>
<dbReference type="BioGRID" id="4259965">
    <property type="interactions" value="20"/>
</dbReference>
<dbReference type="DIP" id="DIP-11425N"/>
<dbReference type="FunCoup" id="P30177">
    <property type="interactions" value="104"/>
</dbReference>
<dbReference type="IntAct" id="P30177">
    <property type="interactions" value="14"/>
</dbReference>
<dbReference type="STRING" id="511145.b0800"/>
<dbReference type="jPOST" id="P30177"/>
<dbReference type="PaxDb" id="511145-b0800"/>
<dbReference type="DNASU" id="945424"/>
<dbReference type="EnsemblBacteria" id="AAC73887">
    <property type="protein sequence ID" value="AAC73887"/>
    <property type="gene ID" value="b0800"/>
</dbReference>
<dbReference type="GeneID" id="75204915"/>
<dbReference type="GeneID" id="945424"/>
<dbReference type="KEGG" id="ecj:JW0785"/>
<dbReference type="KEGG" id="eco:b0800"/>
<dbReference type="KEGG" id="ecoc:C3026_05050"/>
<dbReference type="PATRIC" id="fig|1411691.4.peg.1478"/>
<dbReference type="EchoBASE" id="EB1540"/>
<dbReference type="eggNOG" id="COG0547">
    <property type="taxonomic scope" value="Bacteria"/>
</dbReference>
<dbReference type="HOGENOM" id="CLU_068658_0_0_6"/>
<dbReference type="InParanoid" id="P30177"/>
<dbReference type="OMA" id="AMRIKGE"/>
<dbReference type="OrthoDB" id="9768896at2"/>
<dbReference type="PhylomeDB" id="P30177"/>
<dbReference type="BioCyc" id="EcoCyc:EG11580-MONOMER"/>
<dbReference type="EvolutionaryTrace" id="P30177"/>
<dbReference type="PRO" id="PR:P30177"/>
<dbReference type="Proteomes" id="UP000000625">
    <property type="component" value="Chromosome"/>
</dbReference>
<dbReference type="GO" id="GO:0005829">
    <property type="term" value="C:cytosol"/>
    <property type="evidence" value="ECO:0000314"/>
    <property type="project" value="EcoCyc"/>
</dbReference>
<dbReference type="GO" id="GO:0004048">
    <property type="term" value="F:anthranilate phosphoribosyltransferase activity"/>
    <property type="evidence" value="ECO:0007669"/>
    <property type="project" value="InterPro"/>
</dbReference>
<dbReference type="GO" id="GO:0003677">
    <property type="term" value="F:DNA binding"/>
    <property type="evidence" value="ECO:0000314"/>
    <property type="project" value="EcoCyc"/>
</dbReference>
<dbReference type="GO" id="GO:0042803">
    <property type="term" value="F:protein homodimerization activity"/>
    <property type="evidence" value="ECO:0000314"/>
    <property type="project" value="EcoCyc"/>
</dbReference>
<dbReference type="GO" id="GO:0003723">
    <property type="term" value="F:RNA binding"/>
    <property type="evidence" value="ECO:0000314"/>
    <property type="project" value="EcoCyc"/>
</dbReference>
<dbReference type="GO" id="GO:0000162">
    <property type="term" value="P:L-tryptophan biosynthetic process"/>
    <property type="evidence" value="ECO:0000318"/>
    <property type="project" value="GO_Central"/>
</dbReference>
<dbReference type="FunFam" id="1.20.970.10:FF:000005">
    <property type="entry name" value="Glycosyl transferase family protein"/>
    <property type="match status" value="1"/>
</dbReference>
<dbReference type="FunFam" id="3.40.1030.10:FF:000004">
    <property type="entry name" value="Glycosyl transferase family protein"/>
    <property type="match status" value="1"/>
</dbReference>
<dbReference type="Gene3D" id="3.40.1030.10">
    <property type="entry name" value="Nucleoside phosphorylase/phosphoribosyltransferase catalytic domain"/>
    <property type="match status" value="1"/>
</dbReference>
<dbReference type="Gene3D" id="1.20.970.10">
    <property type="entry name" value="Transferase, Pyrimidine Nucleoside Phosphorylase, Chain C"/>
    <property type="match status" value="1"/>
</dbReference>
<dbReference type="InterPro" id="IPR005940">
    <property type="entry name" value="Anthranilate_Pribosyl_Tfrase"/>
</dbReference>
<dbReference type="InterPro" id="IPR017459">
    <property type="entry name" value="Glycosyl_Trfase_fam3_N_dom"/>
</dbReference>
<dbReference type="InterPro" id="IPR036320">
    <property type="entry name" value="Glycosyl_Trfase_fam3_N_dom_sf"/>
</dbReference>
<dbReference type="InterPro" id="IPR035902">
    <property type="entry name" value="Nuc_phospho_transferase"/>
</dbReference>
<dbReference type="NCBIfam" id="NF006005">
    <property type="entry name" value="PRK08136.1"/>
    <property type="match status" value="1"/>
</dbReference>
<dbReference type="PANTHER" id="PTHR43285">
    <property type="entry name" value="ANTHRANILATE PHOSPHORIBOSYLTRANSFERASE"/>
    <property type="match status" value="1"/>
</dbReference>
<dbReference type="PANTHER" id="PTHR43285:SF4">
    <property type="entry name" value="TRANSFERASE"/>
    <property type="match status" value="1"/>
</dbReference>
<dbReference type="Pfam" id="PF02885">
    <property type="entry name" value="Glycos_trans_3N"/>
    <property type="match status" value="1"/>
</dbReference>
<dbReference type="SUPFAM" id="SSF52418">
    <property type="entry name" value="Nucleoside phosphorylase/phosphoribosyltransferase catalytic domain"/>
    <property type="match status" value="1"/>
</dbReference>
<dbReference type="SUPFAM" id="SSF47648">
    <property type="entry name" value="Nucleoside phosphorylase/phosphoribosyltransferase N-terminal domain"/>
    <property type="match status" value="1"/>
</dbReference>
<name>YBIB_ECOLI</name>
<evidence type="ECO:0000305" key="1"/>
<evidence type="ECO:0007829" key="2">
    <source>
        <dbReference type="PDB" id="8BFT"/>
    </source>
</evidence>